<feature type="chain" id="PRO_0000160060" description="Superoxide dismutase [Mn]">
    <location>
        <begin position="1" status="less than"/>
        <end position="138" status="greater than"/>
    </location>
</feature>
<feature type="binding site" evidence="1">
    <location>
        <position position="2"/>
    </location>
    <ligand>
        <name>Mn(2+)</name>
        <dbReference type="ChEBI" id="CHEBI:29035"/>
    </ligand>
</feature>
<feature type="binding site" evidence="1">
    <location>
        <position position="49"/>
    </location>
    <ligand>
        <name>Mn(2+)</name>
        <dbReference type="ChEBI" id="CHEBI:29035"/>
    </ligand>
</feature>
<feature type="binding site" evidence="1">
    <location>
        <position position="133"/>
    </location>
    <ligand>
        <name>Mn(2+)</name>
        <dbReference type="ChEBI" id="CHEBI:29035"/>
    </ligand>
</feature>
<feature type="binding site" evidence="1">
    <location>
        <position position="137"/>
    </location>
    <ligand>
        <name>Mn(2+)</name>
        <dbReference type="ChEBI" id="CHEBI:29035"/>
    </ligand>
</feature>
<feature type="non-terminal residue">
    <location>
        <position position="1"/>
    </location>
</feature>
<feature type="non-terminal residue">
    <location>
        <position position="138"/>
    </location>
</feature>
<reference key="1">
    <citation type="journal article" date="1995" name="Clin. Mol. Pathol.">
        <title>Rapid identification of mycobacteria from AIDS patients by capillary electrophoretic profiling of amplified SOD gene.</title>
        <authorList>
            <person name="Bull T.J."/>
            <person name="Shanson D.C."/>
            <person name="Archard L.C."/>
        </authorList>
    </citation>
    <scope>NUCLEOTIDE SEQUENCE [GENOMIC DNA]</scope>
    <source>
        <strain>NCTC 25932</strain>
    </source>
</reference>
<accession>P53650</accession>
<comment type="function">
    <text>Destroys superoxide anion radicals which are normally produced within the cells and which are toxic to biological systems.</text>
</comment>
<comment type="catalytic activity">
    <reaction>
        <text>2 superoxide + 2 H(+) = H2O2 + O2</text>
        <dbReference type="Rhea" id="RHEA:20696"/>
        <dbReference type="ChEBI" id="CHEBI:15378"/>
        <dbReference type="ChEBI" id="CHEBI:15379"/>
        <dbReference type="ChEBI" id="CHEBI:16240"/>
        <dbReference type="ChEBI" id="CHEBI:18421"/>
        <dbReference type="EC" id="1.15.1.1"/>
    </reaction>
</comment>
<comment type="cofactor">
    <cofactor evidence="1">
        <name>Mn(2+)</name>
        <dbReference type="ChEBI" id="CHEBI:29035"/>
    </cofactor>
    <text evidence="1">Binds 1 Mn(2+) ion per subunit.</text>
</comment>
<comment type="similarity">
    <text evidence="2">Belongs to the iron/manganese superoxide dismutase family.</text>
</comment>
<organism>
    <name type="scientific">Mycobacterium szulgai</name>
    <dbReference type="NCBI Taxonomy" id="1787"/>
    <lineage>
        <taxon>Bacteria</taxon>
        <taxon>Bacillati</taxon>
        <taxon>Actinomycetota</taxon>
        <taxon>Actinomycetes</taxon>
        <taxon>Mycobacteriales</taxon>
        <taxon>Mycobacteriaceae</taxon>
        <taxon>Mycobacterium</taxon>
    </lineage>
</organism>
<proteinExistence type="inferred from homology"/>
<keyword id="KW-0464">Manganese</keyword>
<keyword id="KW-0479">Metal-binding</keyword>
<keyword id="KW-0560">Oxidoreductase</keyword>
<name>SODM_MYCSZ</name>
<evidence type="ECO:0000250" key="1"/>
<evidence type="ECO:0000305" key="2"/>
<gene>
    <name type="primary">sodA</name>
    <name type="synonym">sod</name>
</gene>
<dbReference type="EC" id="1.15.1.1"/>
<dbReference type="EMBL" id="Z48213">
    <property type="protein sequence ID" value="CAA88246.1"/>
    <property type="molecule type" value="Genomic_DNA"/>
</dbReference>
<dbReference type="PIR" id="S52376">
    <property type="entry name" value="S52376"/>
</dbReference>
<dbReference type="SMR" id="P53650"/>
<dbReference type="STRING" id="1787.A5725_03955"/>
<dbReference type="GO" id="GO:0046872">
    <property type="term" value="F:metal ion binding"/>
    <property type="evidence" value="ECO:0007669"/>
    <property type="project" value="UniProtKB-KW"/>
</dbReference>
<dbReference type="GO" id="GO:0004784">
    <property type="term" value="F:superoxide dismutase activity"/>
    <property type="evidence" value="ECO:0007669"/>
    <property type="project" value="UniProtKB-EC"/>
</dbReference>
<dbReference type="FunFam" id="1.10.287.990:FF:000001">
    <property type="entry name" value="Superoxide dismutase"/>
    <property type="match status" value="1"/>
</dbReference>
<dbReference type="Gene3D" id="1.10.287.990">
    <property type="entry name" value="Fe,Mn superoxide dismutase (SOD) domain"/>
    <property type="match status" value="1"/>
</dbReference>
<dbReference type="Gene3D" id="3.55.40.20">
    <property type="entry name" value="Iron/manganese superoxide dismutase, C-terminal domain"/>
    <property type="match status" value="1"/>
</dbReference>
<dbReference type="InterPro" id="IPR050265">
    <property type="entry name" value="Fe/Mn_Superoxide_Dismutase"/>
</dbReference>
<dbReference type="InterPro" id="IPR001189">
    <property type="entry name" value="Mn/Fe_SOD"/>
</dbReference>
<dbReference type="InterPro" id="IPR019832">
    <property type="entry name" value="Mn/Fe_SOD_C"/>
</dbReference>
<dbReference type="InterPro" id="IPR019831">
    <property type="entry name" value="Mn/Fe_SOD_N"/>
</dbReference>
<dbReference type="InterPro" id="IPR036324">
    <property type="entry name" value="Mn/Fe_SOD_N_sf"/>
</dbReference>
<dbReference type="InterPro" id="IPR036314">
    <property type="entry name" value="SOD_C_sf"/>
</dbReference>
<dbReference type="PANTHER" id="PTHR11404">
    <property type="entry name" value="SUPEROXIDE DISMUTASE 2"/>
    <property type="match status" value="1"/>
</dbReference>
<dbReference type="PANTHER" id="PTHR11404:SF6">
    <property type="entry name" value="SUPEROXIDE DISMUTASE [MN], MITOCHONDRIAL"/>
    <property type="match status" value="1"/>
</dbReference>
<dbReference type="Pfam" id="PF02777">
    <property type="entry name" value="Sod_Fe_C"/>
    <property type="match status" value="1"/>
</dbReference>
<dbReference type="Pfam" id="PF00081">
    <property type="entry name" value="Sod_Fe_N"/>
    <property type="match status" value="1"/>
</dbReference>
<dbReference type="PRINTS" id="PR01703">
    <property type="entry name" value="MNSODISMTASE"/>
</dbReference>
<dbReference type="SUPFAM" id="SSF54719">
    <property type="entry name" value="Fe,Mn superoxide dismutase (SOD), C-terminal domain"/>
    <property type="match status" value="1"/>
</dbReference>
<dbReference type="SUPFAM" id="SSF46609">
    <property type="entry name" value="Fe,Mn superoxide dismutase (SOD), N-terminal domain"/>
    <property type="match status" value="1"/>
</dbReference>
<protein>
    <recommendedName>
        <fullName>Superoxide dismutase [Mn]</fullName>
        <ecNumber>1.15.1.1</ecNumber>
    </recommendedName>
</protein>
<sequence>SHSKHHATYVKGANDAVAKLEEARAQEDFSSILLSEKNLAFNLAGHVNHTIWWKNLSPNGGDKPTGELAAAIDDAFGSFDTFSAQFHAASTTVQGSGWAALGWDTLGNKLLIFQVYDHQTNFPLGIVPLLLLDMWEHA</sequence>